<dbReference type="EMBL" id="AB005233">
    <property type="protein sequence ID" value="BAB11456.1"/>
    <property type="molecule type" value="Genomic_DNA"/>
</dbReference>
<dbReference type="EMBL" id="AB020748">
    <property type="protein sequence ID" value="BAB11456.1"/>
    <property type="status" value="JOINED"/>
    <property type="molecule type" value="Genomic_DNA"/>
</dbReference>
<dbReference type="EMBL" id="CP002688">
    <property type="protein sequence ID" value="AED94685.1"/>
    <property type="molecule type" value="Genomic_DNA"/>
</dbReference>
<dbReference type="RefSeq" id="NP_198965.1">
    <property type="nucleotide sequence ID" value="NM_123514.1"/>
</dbReference>
<dbReference type="SMR" id="Q9FFT0"/>
<dbReference type="BioGRID" id="19402">
    <property type="interactions" value="2"/>
</dbReference>
<dbReference type="FunCoup" id="Q9FFT0">
    <property type="interactions" value="1"/>
</dbReference>
<dbReference type="IntAct" id="Q9FFT0">
    <property type="interactions" value="2"/>
</dbReference>
<dbReference type="STRING" id="3702.Q9FFT0"/>
<dbReference type="PaxDb" id="3702-AT5G41500.1"/>
<dbReference type="EnsemblPlants" id="AT5G41500.1">
    <property type="protein sequence ID" value="AT5G41500.1"/>
    <property type="gene ID" value="AT5G41500"/>
</dbReference>
<dbReference type="GeneID" id="834151"/>
<dbReference type="Gramene" id="AT5G41500.1">
    <property type="protein sequence ID" value="AT5G41500.1"/>
    <property type="gene ID" value="AT5G41500"/>
</dbReference>
<dbReference type="KEGG" id="ath:AT5G41500"/>
<dbReference type="Araport" id="AT5G41500"/>
<dbReference type="TAIR" id="AT5G41500"/>
<dbReference type="HOGENOM" id="CLU_034692_0_0_1"/>
<dbReference type="InParanoid" id="Q9FFT0"/>
<dbReference type="OMA" id="HEIWITT"/>
<dbReference type="PhylomeDB" id="Q9FFT0"/>
<dbReference type="PRO" id="PR:Q9FFT0"/>
<dbReference type="Proteomes" id="UP000006548">
    <property type="component" value="Chromosome 5"/>
</dbReference>
<dbReference type="ExpressionAtlas" id="Q9FFT0">
    <property type="expression patterns" value="baseline"/>
</dbReference>
<dbReference type="CDD" id="cd22157">
    <property type="entry name" value="F-box_AtFBW1-like"/>
    <property type="match status" value="1"/>
</dbReference>
<dbReference type="Gene3D" id="1.20.1280.50">
    <property type="match status" value="1"/>
</dbReference>
<dbReference type="InterPro" id="IPR006527">
    <property type="entry name" value="F-box-assoc_dom_typ1"/>
</dbReference>
<dbReference type="InterPro" id="IPR017451">
    <property type="entry name" value="F-box-assoc_interact_dom"/>
</dbReference>
<dbReference type="InterPro" id="IPR036047">
    <property type="entry name" value="F-box-like_dom_sf"/>
</dbReference>
<dbReference type="InterPro" id="IPR001810">
    <property type="entry name" value="F-box_dom"/>
</dbReference>
<dbReference type="InterPro" id="IPR050796">
    <property type="entry name" value="SCF_F-box_component"/>
</dbReference>
<dbReference type="NCBIfam" id="TIGR01640">
    <property type="entry name" value="F_box_assoc_1"/>
    <property type="match status" value="1"/>
</dbReference>
<dbReference type="PANTHER" id="PTHR31672">
    <property type="entry name" value="BNACNNG10540D PROTEIN"/>
    <property type="match status" value="1"/>
</dbReference>
<dbReference type="PANTHER" id="PTHR31672:SF10">
    <property type="entry name" value="F-BOX DOMAIN-CONTAINING PROTEIN"/>
    <property type="match status" value="1"/>
</dbReference>
<dbReference type="Pfam" id="PF00646">
    <property type="entry name" value="F-box"/>
    <property type="match status" value="1"/>
</dbReference>
<dbReference type="Pfam" id="PF07734">
    <property type="entry name" value="FBA_1"/>
    <property type="match status" value="1"/>
</dbReference>
<dbReference type="SMART" id="SM00256">
    <property type="entry name" value="FBOX"/>
    <property type="match status" value="1"/>
</dbReference>
<dbReference type="SUPFAM" id="SSF81383">
    <property type="entry name" value="F-box domain"/>
    <property type="match status" value="1"/>
</dbReference>
<dbReference type="PROSITE" id="PS50181">
    <property type="entry name" value="FBOX"/>
    <property type="match status" value="1"/>
</dbReference>
<proteinExistence type="predicted"/>
<keyword id="KW-1185">Reference proteome</keyword>
<protein>
    <recommendedName>
        <fullName>Putative F-box protein At5g41500</fullName>
    </recommendedName>
</protein>
<sequence length="403" mass="47129">MATTISNLPRELIEEILSRVPLRAMKAMRLTCKSWNNLSKSESFMKMHIGKAATREEKTMMVAVMPHTLALVSVVVDGVNPSTELKGQFSFLDKEFFIYRVIHYEGLLLCILKDATRIVVWNPYLGQERWIQIRYSHRPHGVDHFKYAVGYADKVSCRSVKLLRFLDYFHKASDKPFFWYEIYDFDSCLWTTLDITPHWGISWTYPRVSLKGNTYWPAREMNTKGFQDHIICFDFTSERFGPLLPLPRAQGCHVSLSCVKEEKLAVLLKHRLHHDSYEYEFEIWITTKIDVEMVSWSKFLRMDMRPKIKLPLSFYVDEEKKVFMGFDHGEYPKLFLNIIGETGFLRKLDLGVHEGHRSPCSYVPSLVQIKHPAGDKMIKQSSLEDRRFAQNSLRLAAIEKLIN</sequence>
<name>FB277_ARATH</name>
<gene>
    <name type="ordered locus">At5g41500</name>
    <name type="ORF">MPK23.3</name>
</gene>
<reference key="1">
    <citation type="journal article" date="1997" name="DNA Res.">
        <title>Structural analysis of Arabidopsis thaliana chromosome 5. I. Sequence features of the 1.6 Mb regions covered by twenty physically assigned P1 clones.</title>
        <authorList>
            <person name="Sato S."/>
            <person name="Kotani H."/>
            <person name="Nakamura Y."/>
            <person name="Kaneko T."/>
            <person name="Asamizu E."/>
            <person name="Fukami M."/>
            <person name="Miyajima N."/>
            <person name="Tabata S."/>
        </authorList>
    </citation>
    <scope>NUCLEOTIDE SEQUENCE [LARGE SCALE GENOMIC DNA]</scope>
    <source>
        <strain>cv. Columbia</strain>
    </source>
</reference>
<reference key="2">
    <citation type="submission" date="1998-12" db="EMBL/GenBank/DDBJ databases">
        <title>Structural analysis of Arabidopsis thaliana chromosome 5. XI.</title>
        <authorList>
            <person name="Kaneko T."/>
            <person name="Katoh T."/>
            <person name="Asamizu E."/>
            <person name="Sato S."/>
            <person name="Nakamura Y."/>
            <person name="Kotani H."/>
            <person name="Tabata S."/>
        </authorList>
    </citation>
    <scope>NUCLEOTIDE SEQUENCE [LARGE SCALE GENOMIC DNA]</scope>
    <source>
        <strain>cv. Columbia</strain>
    </source>
</reference>
<reference key="3">
    <citation type="journal article" date="2017" name="Plant J.">
        <title>Araport11: a complete reannotation of the Arabidopsis thaliana reference genome.</title>
        <authorList>
            <person name="Cheng C.Y."/>
            <person name="Krishnakumar V."/>
            <person name="Chan A.P."/>
            <person name="Thibaud-Nissen F."/>
            <person name="Schobel S."/>
            <person name="Town C.D."/>
        </authorList>
    </citation>
    <scope>GENOME REANNOTATION</scope>
    <source>
        <strain>cv. Columbia</strain>
    </source>
</reference>
<organism>
    <name type="scientific">Arabidopsis thaliana</name>
    <name type="common">Mouse-ear cress</name>
    <dbReference type="NCBI Taxonomy" id="3702"/>
    <lineage>
        <taxon>Eukaryota</taxon>
        <taxon>Viridiplantae</taxon>
        <taxon>Streptophyta</taxon>
        <taxon>Embryophyta</taxon>
        <taxon>Tracheophyta</taxon>
        <taxon>Spermatophyta</taxon>
        <taxon>Magnoliopsida</taxon>
        <taxon>eudicotyledons</taxon>
        <taxon>Gunneridae</taxon>
        <taxon>Pentapetalae</taxon>
        <taxon>rosids</taxon>
        <taxon>malvids</taxon>
        <taxon>Brassicales</taxon>
        <taxon>Brassicaceae</taxon>
        <taxon>Camelineae</taxon>
        <taxon>Arabidopsis</taxon>
    </lineage>
</organism>
<feature type="chain" id="PRO_0000283543" description="Putative F-box protein At5g41500">
    <location>
        <begin position="1"/>
        <end position="403"/>
    </location>
</feature>
<feature type="domain" description="F-box" evidence="1">
    <location>
        <begin position="2"/>
        <end position="47"/>
    </location>
</feature>
<evidence type="ECO:0000255" key="1">
    <source>
        <dbReference type="PROSITE-ProRule" id="PRU00080"/>
    </source>
</evidence>
<accession>Q9FFT0</accession>